<evidence type="ECO:0000255" key="1">
    <source>
        <dbReference type="HAMAP-Rule" id="MF_01633"/>
    </source>
</evidence>
<sequence length="228" mass="25355">MNKISTKKAICILSGGMDSTLSSYIAKKDGFEIIAVHFNYGQRTQNRELKAFRDICNELDIKSKYEIDIPFFTQIGANALTDMSIDVPTGGLEAGVPITYVPFRNGIFLAITAAIAEKEGATAMYIGVVQEDSSGYPDCTEEFIQDMKKAINQGTKEDTKIEIITPLVHLSKAQIVQEAIKLNVPLELTWSCYKEEEEACGVCDSCRLRLNGFEQAGKKDPIKYKEFQ</sequence>
<organism>
    <name type="scientific">Aliarcobacter butzleri (strain RM4018)</name>
    <name type="common">Arcobacter butzleri</name>
    <dbReference type="NCBI Taxonomy" id="367737"/>
    <lineage>
        <taxon>Bacteria</taxon>
        <taxon>Pseudomonadati</taxon>
        <taxon>Campylobacterota</taxon>
        <taxon>Epsilonproteobacteria</taxon>
        <taxon>Campylobacterales</taxon>
        <taxon>Arcobacteraceae</taxon>
        <taxon>Aliarcobacter</taxon>
    </lineage>
</organism>
<dbReference type="EC" id="6.3.4.20" evidence="1"/>
<dbReference type="EMBL" id="CP000361">
    <property type="protein sequence ID" value="ABV68278.1"/>
    <property type="molecule type" value="Genomic_DNA"/>
</dbReference>
<dbReference type="RefSeq" id="WP_012147940.1">
    <property type="nucleotide sequence ID" value="NC_009850.1"/>
</dbReference>
<dbReference type="SMR" id="A8EWF5"/>
<dbReference type="STRING" id="367737.Abu_2061"/>
<dbReference type="GeneID" id="24305250"/>
<dbReference type="KEGG" id="abu:Abu_2061"/>
<dbReference type="eggNOG" id="COG0603">
    <property type="taxonomic scope" value="Bacteria"/>
</dbReference>
<dbReference type="HOGENOM" id="CLU_081854_1_0_7"/>
<dbReference type="UniPathway" id="UPA00391"/>
<dbReference type="Proteomes" id="UP000001136">
    <property type="component" value="Chromosome"/>
</dbReference>
<dbReference type="GO" id="GO:0005524">
    <property type="term" value="F:ATP binding"/>
    <property type="evidence" value="ECO:0007669"/>
    <property type="project" value="UniProtKB-UniRule"/>
</dbReference>
<dbReference type="GO" id="GO:0016879">
    <property type="term" value="F:ligase activity, forming carbon-nitrogen bonds"/>
    <property type="evidence" value="ECO:0007669"/>
    <property type="project" value="UniProtKB-UniRule"/>
</dbReference>
<dbReference type="GO" id="GO:0008270">
    <property type="term" value="F:zinc ion binding"/>
    <property type="evidence" value="ECO:0007669"/>
    <property type="project" value="UniProtKB-UniRule"/>
</dbReference>
<dbReference type="GO" id="GO:0008616">
    <property type="term" value="P:queuosine biosynthetic process"/>
    <property type="evidence" value="ECO:0007669"/>
    <property type="project" value="UniProtKB-UniRule"/>
</dbReference>
<dbReference type="CDD" id="cd01995">
    <property type="entry name" value="QueC-like"/>
    <property type="match status" value="1"/>
</dbReference>
<dbReference type="Gene3D" id="3.40.50.620">
    <property type="entry name" value="HUPs"/>
    <property type="match status" value="1"/>
</dbReference>
<dbReference type="HAMAP" id="MF_01633">
    <property type="entry name" value="QueC"/>
    <property type="match status" value="1"/>
</dbReference>
<dbReference type="InterPro" id="IPR018317">
    <property type="entry name" value="QueC"/>
</dbReference>
<dbReference type="InterPro" id="IPR014729">
    <property type="entry name" value="Rossmann-like_a/b/a_fold"/>
</dbReference>
<dbReference type="NCBIfam" id="TIGR00364">
    <property type="entry name" value="7-cyano-7-deazaguanine synthase QueC"/>
    <property type="match status" value="1"/>
</dbReference>
<dbReference type="PANTHER" id="PTHR42914">
    <property type="entry name" value="7-CYANO-7-DEAZAGUANINE SYNTHASE"/>
    <property type="match status" value="1"/>
</dbReference>
<dbReference type="PANTHER" id="PTHR42914:SF1">
    <property type="entry name" value="7-CYANO-7-DEAZAGUANINE SYNTHASE"/>
    <property type="match status" value="1"/>
</dbReference>
<dbReference type="Pfam" id="PF06508">
    <property type="entry name" value="QueC"/>
    <property type="match status" value="1"/>
</dbReference>
<dbReference type="PIRSF" id="PIRSF006293">
    <property type="entry name" value="ExsB"/>
    <property type="match status" value="1"/>
</dbReference>
<dbReference type="SUPFAM" id="SSF52402">
    <property type="entry name" value="Adenine nucleotide alpha hydrolases-like"/>
    <property type="match status" value="1"/>
</dbReference>
<feature type="chain" id="PRO_0000336889" description="7-cyano-7-deazaguanine synthase">
    <location>
        <begin position="1"/>
        <end position="228"/>
    </location>
</feature>
<feature type="binding site" evidence="1">
    <location>
        <begin position="13"/>
        <end position="23"/>
    </location>
    <ligand>
        <name>ATP</name>
        <dbReference type="ChEBI" id="CHEBI:30616"/>
    </ligand>
</feature>
<feature type="binding site" evidence="1">
    <location>
        <position position="192"/>
    </location>
    <ligand>
        <name>Zn(2+)</name>
        <dbReference type="ChEBI" id="CHEBI:29105"/>
    </ligand>
</feature>
<feature type="binding site" evidence="1">
    <location>
        <position position="200"/>
    </location>
    <ligand>
        <name>Zn(2+)</name>
        <dbReference type="ChEBI" id="CHEBI:29105"/>
    </ligand>
</feature>
<feature type="binding site" evidence="1">
    <location>
        <position position="203"/>
    </location>
    <ligand>
        <name>Zn(2+)</name>
        <dbReference type="ChEBI" id="CHEBI:29105"/>
    </ligand>
</feature>
<feature type="binding site" evidence="1">
    <location>
        <position position="206"/>
    </location>
    <ligand>
        <name>Zn(2+)</name>
        <dbReference type="ChEBI" id="CHEBI:29105"/>
    </ligand>
</feature>
<name>QUEC_ALIB4</name>
<proteinExistence type="inferred from homology"/>
<comment type="function">
    <text evidence="1">Catalyzes the ATP-dependent conversion of 7-carboxy-7-deazaguanine (CDG) to 7-cyano-7-deazaguanine (preQ(0)).</text>
</comment>
<comment type="catalytic activity">
    <reaction evidence="1">
        <text>7-carboxy-7-deazaguanine + NH4(+) + ATP = 7-cyano-7-deazaguanine + ADP + phosphate + H2O + H(+)</text>
        <dbReference type="Rhea" id="RHEA:27982"/>
        <dbReference type="ChEBI" id="CHEBI:15377"/>
        <dbReference type="ChEBI" id="CHEBI:15378"/>
        <dbReference type="ChEBI" id="CHEBI:28938"/>
        <dbReference type="ChEBI" id="CHEBI:30616"/>
        <dbReference type="ChEBI" id="CHEBI:43474"/>
        <dbReference type="ChEBI" id="CHEBI:45075"/>
        <dbReference type="ChEBI" id="CHEBI:61036"/>
        <dbReference type="ChEBI" id="CHEBI:456216"/>
        <dbReference type="EC" id="6.3.4.20"/>
    </reaction>
</comment>
<comment type="cofactor">
    <cofactor evidence="1">
        <name>Zn(2+)</name>
        <dbReference type="ChEBI" id="CHEBI:29105"/>
    </cofactor>
    <text evidence="1">Binds 1 zinc ion per subunit.</text>
</comment>
<comment type="pathway">
    <text evidence="1">Purine metabolism; 7-cyano-7-deazaguanine biosynthesis.</text>
</comment>
<comment type="similarity">
    <text evidence="1">Belongs to the QueC family.</text>
</comment>
<protein>
    <recommendedName>
        <fullName evidence="1">7-cyano-7-deazaguanine synthase</fullName>
        <ecNumber evidence="1">6.3.4.20</ecNumber>
    </recommendedName>
    <alternativeName>
        <fullName evidence="1">7-cyano-7-carbaguanine synthase</fullName>
    </alternativeName>
    <alternativeName>
        <fullName evidence="1">PreQ(0) synthase</fullName>
    </alternativeName>
    <alternativeName>
        <fullName evidence="1">Queuosine biosynthesis protein QueC</fullName>
    </alternativeName>
</protein>
<reference key="1">
    <citation type="journal article" date="2007" name="PLoS ONE">
        <title>The complete genome sequence and analysis of the Epsilonproteobacterium Arcobacter butzleri.</title>
        <authorList>
            <person name="Miller W.G."/>
            <person name="Parker C.T."/>
            <person name="Rubenfield M."/>
            <person name="Mendz G.L."/>
            <person name="Woesten M.M.S.M."/>
            <person name="Ussery D.W."/>
            <person name="Stolz J.F."/>
            <person name="Binnewies T.T."/>
            <person name="Hallin P.F."/>
            <person name="Wang G."/>
            <person name="Malek J.A."/>
            <person name="Rogosin A."/>
            <person name="Stanker L.H."/>
            <person name="Mandrell R.E."/>
        </authorList>
    </citation>
    <scope>NUCLEOTIDE SEQUENCE [LARGE SCALE GENOMIC DNA]</scope>
    <source>
        <strain>RM4018</strain>
    </source>
</reference>
<keyword id="KW-0067">ATP-binding</keyword>
<keyword id="KW-0436">Ligase</keyword>
<keyword id="KW-0479">Metal-binding</keyword>
<keyword id="KW-0547">Nucleotide-binding</keyword>
<keyword id="KW-0671">Queuosine biosynthesis</keyword>
<keyword id="KW-1185">Reference proteome</keyword>
<keyword id="KW-0862">Zinc</keyword>
<gene>
    <name evidence="1" type="primary">queC</name>
    <name type="ordered locus">Abu_2061</name>
</gene>
<accession>A8EWF5</accession>